<name>HIS7_DESOH</name>
<sequence length="195" mass="21170">MKRSASVQRQTAETQVSVTVLLDGIGTQTISTGIPFFNHMLSLFAAHGFFDLTVQASGDIDVDFHHTVEDVGIVLGNSVNKALGDRKGIRRYGYAVTPMDEALAHAVIDLSNRPFLVFNVPSIPAAETGFGVQLAKEFFRAFAVNCGMTLHIRVDYGENEHHVIESVFKAVARALDMATSMDDRITGPLSTKGCI</sequence>
<comment type="catalytic activity">
    <reaction evidence="1">
        <text>D-erythro-1-(imidazol-4-yl)glycerol 3-phosphate = 3-(imidazol-4-yl)-2-oxopropyl phosphate + H2O</text>
        <dbReference type="Rhea" id="RHEA:11040"/>
        <dbReference type="ChEBI" id="CHEBI:15377"/>
        <dbReference type="ChEBI" id="CHEBI:57766"/>
        <dbReference type="ChEBI" id="CHEBI:58278"/>
        <dbReference type="EC" id="4.2.1.19"/>
    </reaction>
</comment>
<comment type="pathway">
    <text evidence="1">Amino-acid biosynthesis; L-histidine biosynthesis; L-histidine from 5-phospho-alpha-D-ribose 1-diphosphate: step 6/9.</text>
</comment>
<comment type="subcellular location">
    <subcellularLocation>
        <location evidence="1">Cytoplasm</location>
    </subcellularLocation>
</comment>
<comment type="similarity">
    <text evidence="1">Belongs to the imidazoleglycerol-phosphate dehydratase family.</text>
</comment>
<gene>
    <name evidence="1" type="primary">hisB</name>
    <name type="ordered locus">Dole_2155</name>
</gene>
<feature type="chain" id="PRO_1000092689" description="Imidazoleglycerol-phosphate dehydratase">
    <location>
        <begin position="1"/>
        <end position="195"/>
    </location>
</feature>
<reference key="1">
    <citation type="submission" date="2007-10" db="EMBL/GenBank/DDBJ databases">
        <title>Complete sequence of Desulfococcus oleovorans Hxd3.</title>
        <authorList>
            <consortium name="US DOE Joint Genome Institute"/>
            <person name="Copeland A."/>
            <person name="Lucas S."/>
            <person name="Lapidus A."/>
            <person name="Barry K."/>
            <person name="Glavina del Rio T."/>
            <person name="Dalin E."/>
            <person name="Tice H."/>
            <person name="Pitluck S."/>
            <person name="Kiss H."/>
            <person name="Brettin T."/>
            <person name="Bruce D."/>
            <person name="Detter J.C."/>
            <person name="Han C."/>
            <person name="Schmutz J."/>
            <person name="Larimer F."/>
            <person name="Land M."/>
            <person name="Hauser L."/>
            <person name="Kyrpides N."/>
            <person name="Kim E."/>
            <person name="Wawrik B."/>
            <person name="Richardson P."/>
        </authorList>
    </citation>
    <scope>NUCLEOTIDE SEQUENCE [LARGE SCALE GENOMIC DNA]</scope>
    <source>
        <strain>DSM 6200 / JCM 39069 / Hxd3</strain>
    </source>
</reference>
<organism>
    <name type="scientific">Desulfosudis oleivorans (strain DSM 6200 / JCM 39069 / Hxd3)</name>
    <name type="common">Desulfococcus oleovorans</name>
    <dbReference type="NCBI Taxonomy" id="96561"/>
    <lineage>
        <taxon>Bacteria</taxon>
        <taxon>Pseudomonadati</taxon>
        <taxon>Thermodesulfobacteriota</taxon>
        <taxon>Desulfobacteria</taxon>
        <taxon>Desulfobacterales</taxon>
        <taxon>Desulfosudaceae</taxon>
        <taxon>Desulfosudis</taxon>
    </lineage>
</organism>
<proteinExistence type="inferred from homology"/>
<protein>
    <recommendedName>
        <fullName evidence="1">Imidazoleglycerol-phosphate dehydratase</fullName>
        <shortName evidence="1">IGPD</shortName>
        <ecNumber evidence="1">4.2.1.19</ecNumber>
    </recommendedName>
</protein>
<evidence type="ECO:0000255" key="1">
    <source>
        <dbReference type="HAMAP-Rule" id="MF_00076"/>
    </source>
</evidence>
<keyword id="KW-0028">Amino-acid biosynthesis</keyword>
<keyword id="KW-0963">Cytoplasm</keyword>
<keyword id="KW-0368">Histidine biosynthesis</keyword>
<keyword id="KW-0456">Lyase</keyword>
<keyword id="KW-1185">Reference proteome</keyword>
<dbReference type="EC" id="4.2.1.19" evidence="1"/>
<dbReference type="EMBL" id="CP000859">
    <property type="protein sequence ID" value="ABW67959.1"/>
    <property type="molecule type" value="Genomic_DNA"/>
</dbReference>
<dbReference type="RefSeq" id="WP_012175571.1">
    <property type="nucleotide sequence ID" value="NC_009943.1"/>
</dbReference>
<dbReference type="SMR" id="A8ZUC7"/>
<dbReference type="STRING" id="96561.Dole_2155"/>
<dbReference type="KEGG" id="dol:Dole_2155"/>
<dbReference type="eggNOG" id="COG0131">
    <property type="taxonomic scope" value="Bacteria"/>
</dbReference>
<dbReference type="HOGENOM" id="CLU_044308_3_0_7"/>
<dbReference type="OrthoDB" id="9790411at2"/>
<dbReference type="UniPathway" id="UPA00031">
    <property type="reaction ID" value="UER00011"/>
</dbReference>
<dbReference type="Proteomes" id="UP000008561">
    <property type="component" value="Chromosome"/>
</dbReference>
<dbReference type="GO" id="GO:0005737">
    <property type="term" value="C:cytoplasm"/>
    <property type="evidence" value="ECO:0007669"/>
    <property type="project" value="UniProtKB-SubCell"/>
</dbReference>
<dbReference type="GO" id="GO:0004424">
    <property type="term" value="F:imidazoleglycerol-phosphate dehydratase activity"/>
    <property type="evidence" value="ECO:0007669"/>
    <property type="project" value="UniProtKB-UniRule"/>
</dbReference>
<dbReference type="GO" id="GO:0000105">
    <property type="term" value="P:L-histidine biosynthetic process"/>
    <property type="evidence" value="ECO:0007669"/>
    <property type="project" value="UniProtKB-UniRule"/>
</dbReference>
<dbReference type="CDD" id="cd07914">
    <property type="entry name" value="IGPD"/>
    <property type="match status" value="1"/>
</dbReference>
<dbReference type="FunFam" id="3.30.230.40:FF:000001">
    <property type="entry name" value="Imidazoleglycerol-phosphate dehydratase HisB"/>
    <property type="match status" value="1"/>
</dbReference>
<dbReference type="FunFam" id="3.30.230.40:FF:000003">
    <property type="entry name" value="Imidazoleglycerol-phosphate dehydratase HisB"/>
    <property type="match status" value="1"/>
</dbReference>
<dbReference type="Gene3D" id="3.30.230.40">
    <property type="entry name" value="Imidazole glycerol phosphate dehydratase, domain 1"/>
    <property type="match status" value="2"/>
</dbReference>
<dbReference type="HAMAP" id="MF_00076">
    <property type="entry name" value="HisB"/>
    <property type="match status" value="1"/>
</dbReference>
<dbReference type="InterPro" id="IPR038494">
    <property type="entry name" value="IGPD_sf"/>
</dbReference>
<dbReference type="InterPro" id="IPR000807">
    <property type="entry name" value="ImidazoleglycerolP_deHydtase"/>
</dbReference>
<dbReference type="InterPro" id="IPR020565">
    <property type="entry name" value="ImidazoleglycerP_deHydtase_CS"/>
</dbReference>
<dbReference type="InterPro" id="IPR020568">
    <property type="entry name" value="Ribosomal_Su5_D2-typ_SF"/>
</dbReference>
<dbReference type="NCBIfam" id="NF002111">
    <property type="entry name" value="PRK00951.2-1"/>
    <property type="match status" value="1"/>
</dbReference>
<dbReference type="NCBIfam" id="NF002114">
    <property type="entry name" value="PRK00951.2-4"/>
    <property type="match status" value="1"/>
</dbReference>
<dbReference type="PANTHER" id="PTHR23133:SF2">
    <property type="entry name" value="IMIDAZOLEGLYCEROL-PHOSPHATE DEHYDRATASE"/>
    <property type="match status" value="1"/>
</dbReference>
<dbReference type="PANTHER" id="PTHR23133">
    <property type="entry name" value="IMIDAZOLEGLYCEROL-PHOSPHATE DEHYDRATASE HIS7"/>
    <property type="match status" value="1"/>
</dbReference>
<dbReference type="Pfam" id="PF00475">
    <property type="entry name" value="IGPD"/>
    <property type="match status" value="1"/>
</dbReference>
<dbReference type="SUPFAM" id="SSF54211">
    <property type="entry name" value="Ribosomal protein S5 domain 2-like"/>
    <property type="match status" value="2"/>
</dbReference>
<dbReference type="PROSITE" id="PS00954">
    <property type="entry name" value="IGP_DEHYDRATASE_1"/>
    <property type="match status" value="1"/>
</dbReference>
<dbReference type="PROSITE" id="PS00955">
    <property type="entry name" value="IGP_DEHYDRATASE_2"/>
    <property type="match status" value="1"/>
</dbReference>
<accession>A8ZUC7</accession>